<evidence type="ECO:0000269" key="1">
    <source>
    </source>
</evidence>
<evidence type="ECO:0000305" key="2"/>
<evidence type="ECO:0007829" key="3">
    <source>
        <dbReference type="PDB" id="7KIN"/>
    </source>
</evidence>
<keyword id="KW-0002">3D-structure</keyword>
<keyword id="KW-0240">DNA-directed RNA polymerase</keyword>
<keyword id="KW-0548">Nucleotidyltransferase</keyword>
<keyword id="KW-1185">Reference proteome</keyword>
<keyword id="KW-0804">Transcription</keyword>
<keyword id="KW-0808">Transferase</keyword>
<gene>
    <name type="primary">rpoZ</name>
    <name type="ordered locus">Rv1390</name>
    <name type="ORF">MTCY21B4.07</name>
</gene>
<feature type="chain" id="PRO_0000128952" description="DNA-directed RNA polymerase subunit omega">
    <location>
        <begin position="1"/>
        <end position="110"/>
    </location>
</feature>
<feature type="helix" evidence="3">
    <location>
        <begin position="34"/>
        <end position="36"/>
    </location>
</feature>
<feature type="helix" evidence="3">
    <location>
        <begin position="40"/>
        <end position="43"/>
    </location>
</feature>
<feature type="strand" evidence="3">
    <location>
        <begin position="46"/>
        <end position="49"/>
    </location>
</feature>
<feature type="helix" evidence="3">
    <location>
        <begin position="50"/>
        <end position="69"/>
    </location>
</feature>
<feature type="strand" evidence="3">
    <location>
        <begin position="72"/>
        <end position="74"/>
    </location>
</feature>
<feature type="helix" evidence="3">
    <location>
        <begin position="91"/>
        <end position="100"/>
    </location>
</feature>
<feature type="strand" evidence="3">
    <location>
        <begin position="104"/>
        <end position="107"/>
    </location>
</feature>
<name>RPOZ_MYCTU</name>
<proteinExistence type="evidence at protein level"/>
<reference key="1">
    <citation type="journal article" date="1998" name="Nature">
        <title>Deciphering the biology of Mycobacterium tuberculosis from the complete genome sequence.</title>
        <authorList>
            <person name="Cole S.T."/>
            <person name="Brosch R."/>
            <person name="Parkhill J."/>
            <person name="Garnier T."/>
            <person name="Churcher C.M."/>
            <person name="Harris D.E."/>
            <person name="Gordon S.V."/>
            <person name="Eiglmeier K."/>
            <person name="Gas S."/>
            <person name="Barry C.E. III"/>
            <person name="Tekaia F."/>
            <person name="Badcock K."/>
            <person name="Basham D."/>
            <person name="Brown D."/>
            <person name="Chillingworth T."/>
            <person name="Connor R."/>
            <person name="Davies R.M."/>
            <person name="Devlin K."/>
            <person name="Feltwell T."/>
            <person name="Gentles S."/>
            <person name="Hamlin N."/>
            <person name="Holroyd S."/>
            <person name="Hornsby T."/>
            <person name="Jagels K."/>
            <person name="Krogh A."/>
            <person name="McLean J."/>
            <person name="Moule S."/>
            <person name="Murphy L.D."/>
            <person name="Oliver S."/>
            <person name="Osborne J."/>
            <person name="Quail M.A."/>
            <person name="Rajandream M.A."/>
            <person name="Rogers J."/>
            <person name="Rutter S."/>
            <person name="Seeger K."/>
            <person name="Skelton S."/>
            <person name="Squares S."/>
            <person name="Squares R."/>
            <person name="Sulston J.E."/>
            <person name="Taylor K."/>
            <person name="Whitehead S."/>
            <person name="Barrell B.G."/>
        </authorList>
    </citation>
    <scope>NUCLEOTIDE SEQUENCE [LARGE SCALE GENOMIC DNA]</scope>
    <source>
        <strain>ATCC 25618 / H37Rv</strain>
    </source>
</reference>
<reference key="2">
    <citation type="journal article" date="2011" name="Mol. Cell. Proteomics">
        <title>Proteogenomic analysis of Mycobacterium tuberculosis by high resolution mass spectrometry.</title>
        <authorList>
            <person name="Kelkar D.S."/>
            <person name="Kumar D."/>
            <person name="Kumar P."/>
            <person name="Balakrishnan L."/>
            <person name="Muthusamy B."/>
            <person name="Yadav A.K."/>
            <person name="Shrivastava P."/>
            <person name="Marimuthu A."/>
            <person name="Anand S."/>
            <person name="Sundaram H."/>
            <person name="Kingsbury R."/>
            <person name="Harsha H.C."/>
            <person name="Nair B."/>
            <person name="Prasad T.S."/>
            <person name="Chauhan D.S."/>
            <person name="Katoch K."/>
            <person name="Katoch V.M."/>
            <person name="Kumar P."/>
            <person name="Chaerkady R."/>
            <person name="Ramachandran S."/>
            <person name="Dash D."/>
            <person name="Pandey A."/>
        </authorList>
    </citation>
    <scope>IDENTIFICATION BY MASS SPECTROMETRY [LARGE SCALE ANALYSIS]</scope>
    <source>
        <strain>ATCC 25618 / H37Rv</strain>
    </source>
</reference>
<reference key="3">
    <citation type="journal article" date="2012" name="Nucleic Acids Res.">
        <title>Mycobacterium tuberculosis RbpA protein is a new type of transcriptional activator that stabilizes the sigma A-containing RNA polymerase holoenzyme.</title>
        <authorList>
            <person name="Hu Y."/>
            <person name="Morichaud Z."/>
            <person name="Chen S."/>
            <person name="Leonetti J.P."/>
            <person name="Brodolin K."/>
        </authorList>
    </citation>
    <scope>FUNCTION</scope>
    <scope>SUBUNIT</scope>
    <source>
        <strain>ATCC 25618 / H37Rv</strain>
    </source>
</reference>
<dbReference type="EC" id="2.7.7.6"/>
<dbReference type="EMBL" id="AL123456">
    <property type="protein sequence ID" value="CCP44149.1"/>
    <property type="molecule type" value="Genomic_DNA"/>
</dbReference>
<dbReference type="PIR" id="D70899">
    <property type="entry name" value="D70899"/>
</dbReference>
<dbReference type="RefSeq" id="NP_215906.1">
    <property type="nucleotide sequence ID" value="NC_000962.3"/>
</dbReference>
<dbReference type="RefSeq" id="WP_003407248.1">
    <property type="nucleotide sequence ID" value="NZ_NVQJ01000050.1"/>
</dbReference>
<dbReference type="PDB" id="5UH5">
    <property type="method" value="X-ray"/>
    <property type="resolution" value="3.75 A"/>
    <property type="chains" value="E=1-110"/>
</dbReference>
<dbReference type="PDB" id="5UH6">
    <property type="method" value="X-ray"/>
    <property type="resolution" value="3.84 A"/>
    <property type="chains" value="E=1-110"/>
</dbReference>
<dbReference type="PDB" id="5UH8">
    <property type="method" value="X-ray"/>
    <property type="resolution" value="4.18 A"/>
    <property type="chains" value="E=1-110"/>
</dbReference>
<dbReference type="PDB" id="5UH9">
    <property type="method" value="X-ray"/>
    <property type="resolution" value="4.40 A"/>
    <property type="chains" value="E=1-110"/>
</dbReference>
<dbReference type="PDB" id="5UHA">
    <property type="method" value="X-ray"/>
    <property type="resolution" value="3.91 A"/>
    <property type="chains" value="E=1-110"/>
</dbReference>
<dbReference type="PDB" id="5UHB">
    <property type="method" value="X-ray"/>
    <property type="resolution" value="4.29 A"/>
    <property type="chains" value="E=1-110"/>
</dbReference>
<dbReference type="PDB" id="5UHC">
    <property type="method" value="X-ray"/>
    <property type="resolution" value="3.80 A"/>
    <property type="chains" value="E=1-110"/>
</dbReference>
<dbReference type="PDB" id="5UHD">
    <property type="method" value="X-ray"/>
    <property type="resolution" value="4.01 A"/>
    <property type="chains" value="E=1-110"/>
</dbReference>
<dbReference type="PDB" id="5UHE">
    <property type="method" value="X-ray"/>
    <property type="resolution" value="4.04 A"/>
    <property type="chains" value="E=1-110"/>
</dbReference>
<dbReference type="PDB" id="5UHF">
    <property type="method" value="X-ray"/>
    <property type="resolution" value="4.34 A"/>
    <property type="chains" value="E=1-110"/>
</dbReference>
<dbReference type="PDB" id="5UHG">
    <property type="method" value="X-ray"/>
    <property type="resolution" value="3.97 A"/>
    <property type="chains" value="E=1-110"/>
</dbReference>
<dbReference type="PDB" id="5ZX2">
    <property type="method" value="X-ray"/>
    <property type="resolution" value="2.80 A"/>
    <property type="chains" value="E=1-110"/>
</dbReference>
<dbReference type="PDB" id="5ZX3">
    <property type="method" value="X-ray"/>
    <property type="resolution" value="2.75 A"/>
    <property type="chains" value="E=1-110"/>
</dbReference>
<dbReference type="PDB" id="6BZO">
    <property type="method" value="EM"/>
    <property type="resolution" value="3.38 A"/>
    <property type="chains" value="E=2-110"/>
</dbReference>
<dbReference type="PDB" id="6C04">
    <property type="method" value="EM"/>
    <property type="resolution" value="3.27 A"/>
    <property type="chains" value="E=2-110"/>
</dbReference>
<dbReference type="PDB" id="6C05">
    <property type="method" value="EM"/>
    <property type="resolution" value="5.15 A"/>
    <property type="chains" value="E=2-110"/>
</dbReference>
<dbReference type="PDB" id="6C06">
    <property type="method" value="EM"/>
    <property type="resolution" value="5.15 A"/>
    <property type="chains" value="E=2-110"/>
</dbReference>
<dbReference type="PDB" id="6DV9">
    <property type="method" value="X-ray"/>
    <property type="resolution" value="3.80 A"/>
    <property type="chains" value="E=1-110"/>
</dbReference>
<dbReference type="PDB" id="6DVB">
    <property type="method" value="X-ray"/>
    <property type="resolution" value="3.80 A"/>
    <property type="chains" value="E=1-110"/>
</dbReference>
<dbReference type="PDB" id="6DVC">
    <property type="method" value="X-ray"/>
    <property type="resolution" value="3.30 A"/>
    <property type="chains" value="E=1-110"/>
</dbReference>
<dbReference type="PDB" id="6DVD">
    <property type="method" value="X-ray"/>
    <property type="resolution" value="3.90 A"/>
    <property type="chains" value="E=1-110"/>
</dbReference>
<dbReference type="PDB" id="6DVE">
    <property type="method" value="X-ray"/>
    <property type="resolution" value="3.81 A"/>
    <property type="chains" value="E=1-110"/>
</dbReference>
<dbReference type="PDB" id="6EDT">
    <property type="method" value="EM"/>
    <property type="chains" value="E=2-110"/>
</dbReference>
<dbReference type="PDB" id="6EE8">
    <property type="method" value="EM"/>
    <property type="resolution" value="3.92 A"/>
    <property type="chains" value="E=2-110"/>
</dbReference>
<dbReference type="PDB" id="6EEC">
    <property type="method" value="EM"/>
    <property type="resolution" value="3.55 A"/>
    <property type="chains" value="E=2-110"/>
</dbReference>
<dbReference type="PDB" id="6FBV">
    <property type="method" value="EM"/>
    <property type="resolution" value="3.50 A"/>
    <property type="chains" value="E=1-110"/>
</dbReference>
<dbReference type="PDB" id="6JCX">
    <property type="method" value="X-ray"/>
    <property type="resolution" value="2.90 A"/>
    <property type="chains" value="E=1-110"/>
</dbReference>
<dbReference type="PDB" id="6JCY">
    <property type="method" value="X-ray"/>
    <property type="resolution" value="3.11 A"/>
    <property type="chains" value="E=1-110"/>
</dbReference>
<dbReference type="PDB" id="6KON">
    <property type="method" value="X-ray"/>
    <property type="resolution" value="3.00 A"/>
    <property type="chains" value="E=1-110"/>
</dbReference>
<dbReference type="PDB" id="6KOO">
    <property type="method" value="X-ray"/>
    <property type="resolution" value="2.80 A"/>
    <property type="chains" value="E=1-110"/>
</dbReference>
<dbReference type="PDB" id="6KOP">
    <property type="method" value="X-ray"/>
    <property type="resolution" value="3.30 A"/>
    <property type="chains" value="E=1-110"/>
</dbReference>
<dbReference type="PDB" id="6KOQ">
    <property type="method" value="X-ray"/>
    <property type="resolution" value="3.35 A"/>
    <property type="chains" value="E=1-110"/>
</dbReference>
<dbReference type="PDB" id="6M7J">
    <property type="method" value="EM"/>
    <property type="resolution" value="4.40 A"/>
    <property type="chains" value="E=2-110"/>
</dbReference>
<dbReference type="PDB" id="6TYE">
    <property type="method" value="X-ray"/>
    <property type="resolution" value="3.79 A"/>
    <property type="chains" value="E=1-110"/>
</dbReference>
<dbReference type="PDB" id="6TYF">
    <property type="method" value="X-ray"/>
    <property type="resolution" value="3.80 A"/>
    <property type="chains" value="E=1-110"/>
</dbReference>
<dbReference type="PDB" id="6TYG">
    <property type="method" value="X-ray"/>
    <property type="resolution" value="3.50 A"/>
    <property type="chains" value="E=1-110"/>
</dbReference>
<dbReference type="PDB" id="6VVX">
    <property type="method" value="EM"/>
    <property type="resolution" value="3.39 A"/>
    <property type="chains" value="E=2-110"/>
</dbReference>
<dbReference type="PDB" id="6VVY">
    <property type="method" value="EM"/>
    <property type="resolution" value="3.42 A"/>
    <property type="chains" value="E=2-110"/>
</dbReference>
<dbReference type="PDB" id="6VVZ">
    <property type="method" value="EM"/>
    <property type="resolution" value="3.72 A"/>
    <property type="chains" value="E=2-110"/>
</dbReference>
<dbReference type="PDB" id="6VW0">
    <property type="method" value="EM"/>
    <property type="resolution" value="3.59 A"/>
    <property type="chains" value="E=2-110"/>
</dbReference>
<dbReference type="PDB" id="7KIF">
    <property type="method" value="EM"/>
    <property type="resolution" value="2.94 A"/>
    <property type="chains" value="E=1-110"/>
</dbReference>
<dbReference type="PDB" id="7KIM">
    <property type="method" value="EM"/>
    <property type="resolution" value="3.38 A"/>
    <property type="chains" value="E=1-110"/>
</dbReference>
<dbReference type="PDB" id="7KIN">
    <property type="method" value="EM"/>
    <property type="resolution" value="2.74 A"/>
    <property type="chains" value="E=1-110"/>
</dbReference>
<dbReference type="PDB" id="7PP4">
    <property type="method" value="EM"/>
    <property type="resolution" value="3.84 A"/>
    <property type="chains" value="e=1-110"/>
</dbReference>
<dbReference type="PDB" id="7Q4U">
    <property type="method" value="EM"/>
    <property type="resolution" value="4.39 A"/>
    <property type="chains" value="DA/E/JA/K/PA/Q/VA/X=1-110"/>
</dbReference>
<dbReference type="PDB" id="7Q59">
    <property type="method" value="EM"/>
    <property type="resolution" value="4.36 A"/>
    <property type="chains" value="E/e=1-110"/>
</dbReference>
<dbReference type="PDB" id="7RWI">
    <property type="method" value="X-ray"/>
    <property type="resolution" value="3.70 A"/>
    <property type="chains" value="E=1-110"/>
</dbReference>
<dbReference type="PDB" id="7U22">
    <property type="method" value="X-ray"/>
    <property type="resolution" value="3.87 A"/>
    <property type="chains" value="E=1-110"/>
</dbReference>
<dbReference type="PDB" id="7Z8Q">
    <property type="method" value="EM"/>
    <property type="resolution" value="4.08 A"/>
    <property type="chains" value="e=1-110"/>
</dbReference>
<dbReference type="PDB" id="7ZF2">
    <property type="method" value="EM"/>
    <property type="resolution" value="3.86 A"/>
    <property type="chains" value="E=1-110"/>
</dbReference>
<dbReference type="PDB" id="8E74">
    <property type="method" value="EM"/>
    <property type="resolution" value="2.94 A"/>
    <property type="chains" value="E=1-110"/>
</dbReference>
<dbReference type="PDB" id="8E79">
    <property type="method" value="EM"/>
    <property type="resolution" value="3.71 A"/>
    <property type="chains" value="E=1-110"/>
</dbReference>
<dbReference type="PDB" id="8E82">
    <property type="method" value="EM"/>
    <property type="resolution" value="3.03 A"/>
    <property type="chains" value="E=1-110"/>
</dbReference>
<dbReference type="PDB" id="8E8M">
    <property type="method" value="EM"/>
    <property type="resolution" value="3.13 A"/>
    <property type="chains" value="E=1-110"/>
</dbReference>
<dbReference type="PDB" id="8E95">
    <property type="method" value="EM"/>
    <property type="resolution" value="2.90 A"/>
    <property type="chains" value="E=1-110"/>
</dbReference>
<dbReference type="PDB" id="8EHQ">
    <property type="method" value="EM"/>
    <property type="resolution" value="3.00 A"/>
    <property type="chains" value="E=1-110"/>
</dbReference>
<dbReference type="PDB" id="8EJ3">
    <property type="method" value="EM"/>
    <property type="resolution" value="3.13 A"/>
    <property type="chains" value="E=1-110"/>
</dbReference>
<dbReference type="PDB" id="8EOE">
    <property type="method" value="EM"/>
    <property type="resolution" value="3.20 A"/>
    <property type="chains" value="E=1-110"/>
</dbReference>
<dbReference type="PDB" id="8EOF">
    <property type="method" value="EM"/>
    <property type="resolution" value="3.30 A"/>
    <property type="chains" value="E=1-110"/>
</dbReference>
<dbReference type="PDB" id="8EOS">
    <property type="method" value="EM"/>
    <property type="resolution" value="3.10 A"/>
    <property type="chains" value="E=1-110"/>
</dbReference>
<dbReference type="PDB" id="8EOT">
    <property type="method" value="EM"/>
    <property type="resolution" value="3.30 A"/>
    <property type="chains" value="E=1-110"/>
</dbReference>
<dbReference type="PDB" id="8EXY">
    <property type="method" value="EM"/>
    <property type="resolution" value="3.20 A"/>
    <property type="chains" value="E=1-110"/>
</dbReference>
<dbReference type="PDB" id="8HIH">
    <property type="method" value="EM"/>
    <property type="resolution" value="3.66 A"/>
    <property type="chains" value="E=1-110"/>
</dbReference>
<dbReference type="PDBsum" id="5UH5"/>
<dbReference type="PDBsum" id="5UH6"/>
<dbReference type="PDBsum" id="5UH8"/>
<dbReference type="PDBsum" id="5UH9"/>
<dbReference type="PDBsum" id="5UHA"/>
<dbReference type="PDBsum" id="5UHB"/>
<dbReference type="PDBsum" id="5UHC"/>
<dbReference type="PDBsum" id="5UHD"/>
<dbReference type="PDBsum" id="5UHE"/>
<dbReference type="PDBsum" id="5UHF"/>
<dbReference type="PDBsum" id="5UHG"/>
<dbReference type="PDBsum" id="5ZX2"/>
<dbReference type="PDBsum" id="5ZX3"/>
<dbReference type="PDBsum" id="6BZO"/>
<dbReference type="PDBsum" id="6C04"/>
<dbReference type="PDBsum" id="6C05"/>
<dbReference type="PDBsum" id="6C06"/>
<dbReference type="PDBsum" id="6DV9"/>
<dbReference type="PDBsum" id="6DVB"/>
<dbReference type="PDBsum" id="6DVC"/>
<dbReference type="PDBsum" id="6DVD"/>
<dbReference type="PDBsum" id="6DVE"/>
<dbReference type="PDBsum" id="6EDT"/>
<dbReference type="PDBsum" id="6EE8"/>
<dbReference type="PDBsum" id="6EEC"/>
<dbReference type="PDBsum" id="6FBV"/>
<dbReference type="PDBsum" id="6JCX"/>
<dbReference type="PDBsum" id="6JCY"/>
<dbReference type="PDBsum" id="6KON"/>
<dbReference type="PDBsum" id="6KOO"/>
<dbReference type="PDBsum" id="6KOP"/>
<dbReference type="PDBsum" id="6KOQ"/>
<dbReference type="PDBsum" id="6M7J"/>
<dbReference type="PDBsum" id="6TYE"/>
<dbReference type="PDBsum" id="6TYF"/>
<dbReference type="PDBsum" id="6TYG"/>
<dbReference type="PDBsum" id="6VVX"/>
<dbReference type="PDBsum" id="6VVY"/>
<dbReference type="PDBsum" id="6VVZ"/>
<dbReference type="PDBsum" id="6VW0"/>
<dbReference type="PDBsum" id="7KIF"/>
<dbReference type="PDBsum" id="7KIM"/>
<dbReference type="PDBsum" id="7KIN"/>
<dbReference type="PDBsum" id="7PP4"/>
<dbReference type="PDBsum" id="7Q4U"/>
<dbReference type="PDBsum" id="7Q59"/>
<dbReference type="PDBsum" id="7RWI"/>
<dbReference type="PDBsum" id="7U22"/>
<dbReference type="PDBsum" id="7Z8Q"/>
<dbReference type="PDBsum" id="7ZF2"/>
<dbReference type="PDBsum" id="8E74"/>
<dbReference type="PDBsum" id="8E79"/>
<dbReference type="PDBsum" id="8E82"/>
<dbReference type="PDBsum" id="8E8M"/>
<dbReference type="PDBsum" id="8E95"/>
<dbReference type="PDBsum" id="8EHQ"/>
<dbReference type="PDBsum" id="8EJ3"/>
<dbReference type="PDBsum" id="8EOE"/>
<dbReference type="PDBsum" id="8EOF"/>
<dbReference type="PDBsum" id="8EOS"/>
<dbReference type="PDBsum" id="8EOT"/>
<dbReference type="PDBsum" id="8EXY"/>
<dbReference type="PDBsum" id="8HIH"/>
<dbReference type="EMDB" id="EMD-13579"/>
<dbReference type="EMDB" id="EMD-13817"/>
<dbReference type="EMDB" id="EMD-13829"/>
<dbReference type="EMDB" id="EMD-14378"/>
<dbReference type="EMDB" id="EMD-14560"/>
<dbReference type="EMDB" id="EMD-14974"/>
<dbReference type="EMDB" id="EMD-28149"/>
<dbReference type="EMDB" id="EMD-28174"/>
<dbReference type="EMDB" id="EMD-28373"/>
<dbReference type="EMDB" id="EMD-28374"/>
<dbReference type="EMDB" id="EMD-28466"/>
<dbReference type="EMDB" id="EMD-28467"/>
<dbReference type="EMDB" id="EMD-28665"/>
<dbReference type="EMDB" id="EMD-34816"/>
<dbReference type="EMDB" id="EMD-4230"/>
<dbReference type="EMDB" id="EMD-62293"/>
<dbReference type="EMDB" id="EMD-62294"/>
<dbReference type="EMDB" id="EMD-62295"/>
<dbReference type="SASBDB" id="P9WGY5"/>
<dbReference type="SMR" id="P9WGY5"/>
<dbReference type="FunCoup" id="P9WGY5">
    <property type="interactions" value="7"/>
</dbReference>
<dbReference type="IntAct" id="P9WGY5">
    <property type="interactions" value="3"/>
</dbReference>
<dbReference type="STRING" id="83332.Rv1390"/>
<dbReference type="PaxDb" id="83332-Rv1390"/>
<dbReference type="DNASU" id="886754"/>
<dbReference type="GeneID" id="45425368"/>
<dbReference type="GeneID" id="886754"/>
<dbReference type="KEGG" id="mtu:Rv1390"/>
<dbReference type="KEGG" id="mtv:RVBD_1390"/>
<dbReference type="TubercuList" id="Rv1390"/>
<dbReference type="eggNOG" id="COG1758">
    <property type="taxonomic scope" value="Bacteria"/>
</dbReference>
<dbReference type="InParanoid" id="P9WGY5"/>
<dbReference type="OrthoDB" id="8481372at2"/>
<dbReference type="PhylomeDB" id="P9WGY5"/>
<dbReference type="BRENDA" id="2.7.7.6">
    <property type="organism ID" value="3445"/>
</dbReference>
<dbReference type="Reactome" id="R-HSA-9639775">
    <property type="pathway name" value="Antimicrobial action and antimicrobial resistance in Mtb"/>
</dbReference>
<dbReference type="Proteomes" id="UP000001584">
    <property type="component" value="Chromosome"/>
</dbReference>
<dbReference type="GO" id="GO:0005829">
    <property type="term" value="C:cytosol"/>
    <property type="evidence" value="ECO:0000304"/>
    <property type="project" value="Reactome"/>
</dbReference>
<dbReference type="GO" id="GO:0000345">
    <property type="term" value="C:cytosolic DNA-directed RNA polymerase complex"/>
    <property type="evidence" value="ECO:0000318"/>
    <property type="project" value="GO_Central"/>
</dbReference>
<dbReference type="GO" id="GO:0009274">
    <property type="term" value="C:peptidoglycan-based cell wall"/>
    <property type="evidence" value="ECO:0007005"/>
    <property type="project" value="MTBBASE"/>
</dbReference>
<dbReference type="GO" id="GO:0001000">
    <property type="term" value="F:bacterial-type RNA polymerase core enzyme binding"/>
    <property type="evidence" value="ECO:0000318"/>
    <property type="project" value="GO_Central"/>
</dbReference>
<dbReference type="GO" id="GO:0003677">
    <property type="term" value="F:DNA binding"/>
    <property type="evidence" value="ECO:0007669"/>
    <property type="project" value="UniProtKB-UniRule"/>
</dbReference>
<dbReference type="GO" id="GO:0003899">
    <property type="term" value="F:DNA-directed RNA polymerase activity"/>
    <property type="evidence" value="ECO:0007669"/>
    <property type="project" value="UniProtKB-UniRule"/>
</dbReference>
<dbReference type="GO" id="GO:0006352">
    <property type="term" value="P:DNA-templated transcription initiation"/>
    <property type="evidence" value="ECO:0000318"/>
    <property type="project" value="GO_Central"/>
</dbReference>
<dbReference type="FunFam" id="3.90.940.10:FF:000002">
    <property type="entry name" value="DNA-directed RNA polymerase subunit omega"/>
    <property type="match status" value="1"/>
</dbReference>
<dbReference type="Gene3D" id="3.90.940.10">
    <property type="match status" value="1"/>
</dbReference>
<dbReference type="HAMAP" id="MF_00366">
    <property type="entry name" value="RNApol_bact_RpoZ"/>
    <property type="match status" value="1"/>
</dbReference>
<dbReference type="InterPro" id="IPR003716">
    <property type="entry name" value="DNA-dir_RNA_pol_omega"/>
</dbReference>
<dbReference type="InterPro" id="IPR006110">
    <property type="entry name" value="Pol_omega/Rpo6/RPB6"/>
</dbReference>
<dbReference type="InterPro" id="IPR036161">
    <property type="entry name" value="RPB6/omega-like_sf"/>
</dbReference>
<dbReference type="NCBIfam" id="TIGR00690">
    <property type="entry name" value="rpoZ"/>
    <property type="match status" value="1"/>
</dbReference>
<dbReference type="PANTHER" id="PTHR34476">
    <property type="entry name" value="DNA-DIRECTED RNA POLYMERASE SUBUNIT OMEGA"/>
    <property type="match status" value="1"/>
</dbReference>
<dbReference type="PANTHER" id="PTHR34476:SF1">
    <property type="entry name" value="DNA-DIRECTED RNA POLYMERASE SUBUNIT OMEGA"/>
    <property type="match status" value="1"/>
</dbReference>
<dbReference type="Pfam" id="PF01192">
    <property type="entry name" value="RNA_pol_Rpb6"/>
    <property type="match status" value="1"/>
</dbReference>
<dbReference type="SMART" id="SM01409">
    <property type="entry name" value="RNA_pol_Rpb6"/>
    <property type="match status" value="1"/>
</dbReference>
<dbReference type="SUPFAM" id="SSF63562">
    <property type="entry name" value="RPB6/omega subunit-like"/>
    <property type="match status" value="1"/>
</dbReference>
<comment type="function">
    <text evidence="1">Promotes RNA polymerase assembly. Latches the N- and C-terminal regions of the beta' subunit thereby facilitating its interaction with the beta and alpha subunits.</text>
</comment>
<comment type="catalytic activity">
    <reaction>
        <text>RNA(n) + a ribonucleoside 5'-triphosphate = RNA(n+1) + diphosphate</text>
        <dbReference type="Rhea" id="RHEA:21248"/>
        <dbReference type="Rhea" id="RHEA-COMP:14527"/>
        <dbReference type="Rhea" id="RHEA-COMP:17342"/>
        <dbReference type="ChEBI" id="CHEBI:33019"/>
        <dbReference type="ChEBI" id="CHEBI:61557"/>
        <dbReference type="ChEBI" id="CHEBI:140395"/>
        <dbReference type="EC" id="2.7.7.6"/>
    </reaction>
</comment>
<comment type="subunit">
    <text evidence="1">The RNAP catalytic core consists of 2 alpha, 1 beta, 1 beta' and 1 omega subunit. When a sigma factor is associated with the core the holoenzyme is formed, which can initiate transcription.</text>
</comment>
<comment type="similarity">
    <text evidence="2">Belongs to the RNA polymerase subunit omega family.</text>
</comment>
<accession>P9WGY5</accession>
<accession>L0T993</accession>
<accession>P66721</accession>
<accession>P71660</accession>
<organism>
    <name type="scientific">Mycobacterium tuberculosis (strain ATCC 25618 / H37Rv)</name>
    <dbReference type="NCBI Taxonomy" id="83332"/>
    <lineage>
        <taxon>Bacteria</taxon>
        <taxon>Bacillati</taxon>
        <taxon>Actinomycetota</taxon>
        <taxon>Actinomycetes</taxon>
        <taxon>Mycobacteriales</taxon>
        <taxon>Mycobacteriaceae</taxon>
        <taxon>Mycobacterium</taxon>
        <taxon>Mycobacterium tuberculosis complex</taxon>
    </lineage>
</organism>
<protein>
    <recommendedName>
        <fullName>DNA-directed RNA polymerase subunit omega</fullName>
        <shortName>RNAP omega subunit</shortName>
        <ecNumber>2.7.7.6</ecNumber>
    </recommendedName>
    <alternativeName>
        <fullName>RNA polymerase omega subunit</fullName>
    </alternativeName>
    <alternativeName>
        <fullName>Transcriptase subunit omega</fullName>
    </alternativeName>
</protein>
<sequence length="110" mass="11842">MSISQSDASLAAVPAVDQFDPSSGASGGYDTPLGITNPPIDELLDRVSSKYALVIYAAKRARQINDYYNQLGEGILEYVGPLVEPGLQEKPLSIALREIHADLLEHTEGE</sequence>